<proteinExistence type="inferred from homology"/>
<accession>Q1DRC9</accession>
<accession>A0A0D6K9P1</accession>
<accession>J3K3H4</accession>
<feature type="chain" id="PRO_0000364328" description="Eukaryotic translation initiation factor 3 subunit F">
    <location>
        <begin position="1"/>
        <end position="348"/>
    </location>
</feature>
<feature type="domain" description="MPN" evidence="2">
    <location>
        <begin position="30"/>
        <end position="166"/>
    </location>
</feature>
<feature type="region of interest" description="Disordered" evidence="3">
    <location>
        <begin position="312"/>
        <end position="348"/>
    </location>
</feature>
<feature type="compositionally biased region" description="Gly residues" evidence="3">
    <location>
        <begin position="312"/>
        <end position="327"/>
    </location>
</feature>
<feature type="compositionally biased region" description="Low complexity" evidence="3">
    <location>
        <begin position="328"/>
        <end position="341"/>
    </location>
</feature>
<reference key="1">
    <citation type="journal article" date="2009" name="Genome Res.">
        <title>Comparative genomic analyses of the human fungal pathogens Coccidioides and their relatives.</title>
        <authorList>
            <person name="Sharpton T.J."/>
            <person name="Stajich J.E."/>
            <person name="Rounsley S.D."/>
            <person name="Gardner M.J."/>
            <person name="Wortman J.R."/>
            <person name="Jordar V.S."/>
            <person name="Maiti R."/>
            <person name="Kodira C.D."/>
            <person name="Neafsey D.E."/>
            <person name="Zeng Q."/>
            <person name="Hung C.-Y."/>
            <person name="McMahan C."/>
            <person name="Muszewska A."/>
            <person name="Grynberg M."/>
            <person name="Mandel M.A."/>
            <person name="Kellner E.M."/>
            <person name="Barker B.M."/>
            <person name="Galgiani J.N."/>
            <person name="Orbach M.J."/>
            <person name="Kirkland T.N."/>
            <person name="Cole G.T."/>
            <person name="Henn M.R."/>
            <person name="Birren B.W."/>
            <person name="Taylor J.W."/>
        </authorList>
    </citation>
    <scope>NUCLEOTIDE SEQUENCE [LARGE SCALE GENOMIC DNA]</scope>
    <source>
        <strain>RS</strain>
    </source>
</reference>
<reference key="2">
    <citation type="journal article" date="2010" name="Genome Res.">
        <title>Population genomic sequencing of Coccidioides fungi reveals recent hybridization and transposon control.</title>
        <authorList>
            <person name="Neafsey D.E."/>
            <person name="Barker B.M."/>
            <person name="Sharpton T.J."/>
            <person name="Stajich J.E."/>
            <person name="Park D.J."/>
            <person name="Whiston E."/>
            <person name="Hung C.-Y."/>
            <person name="McMahan C."/>
            <person name="White J."/>
            <person name="Sykes S."/>
            <person name="Heiman D."/>
            <person name="Young S."/>
            <person name="Zeng Q."/>
            <person name="Abouelleil A."/>
            <person name="Aftuck L."/>
            <person name="Bessette D."/>
            <person name="Brown A."/>
            <person name="FitzGerald M."/>
            <person name="Lui A."/>
            <person name="Macdonald J.P."/>
            <person name="Priest M."/>
            <person name="Orbach M.J."/>
            <person name="Galgiani J.N."/>
            <person name="Kirkland T.N."/>
            <person name="Cole G.T."/>
            <person name="Birren B.W."/>
            <person name="Henn M.R."/>
            <person name="Taylor J.W."/>
            <person name="Rounsley S.D."/>
        </authorList>
    </citation>
    <scope>GENOME REANNOTATION</scope>
    <source>
        <strain>RS</strain>
    </source>
</reference>
<sequence>MADTGSFIHLARPLGPATVGVAPSTAPLNVVIQPQAIFSILDHSLRRNADQERVIGTLLGTRSEDGTEVEIRTCFAVGHTETTDQVEVDMEYQKQMLALHLKANPKEVLVGWYATSSELNTFSALIQNFYGGQGDGTWPHPAVHLTVSTEPGKDIETRTYISAPVGVTAERAADSAAFIPVPYEIRYSEAERNGLEAIAQARDAEDRASSLFTDIETLEKSIEEVLGMIDRVSKYVESVIDEEAPASTALGQFLLNALALAPKVDPADIESDFNKHIQDVLVVSYLANTIRTQMELSNRLATAQLTLGGGDSTAIGGTGAESGGQRGGQRNNRQRGGQQRNQAEELRA</sequence>
<organism>
    <name type="scientific">Coccidioides immitis (strain RS)</name>
    <name type="common">Valley fever fungus</name>
    <dbReference type="NCBI Taxonomy" id="246410"/>
    <lineage>
        <taxon>Eukaryota</taxon>
        <taxon>Fungi</taxon>
        <taxon>Dikarya</taxon>
        <taxon>Ascomycota</taxon>
        <taxon>Pezizomycotina</taxon>
        <taxon>Eurotiomycetes</taxon>
        <taxon>Eurotiomycetidae</taxon>
        <taxon>Onygenales</taxon>
        <taxon>Onygenaceae</taxon>
        <taxon>Coccidioides</taxon>
    </lineage>
</organism>
<comment type="function">
    <text evidence="1">Component of the eukaryotic translation initiation factor 3 (eIF-3) complex, which is involved in protein synthesis of a specialized repertoire of mRNAs and, together with other initiation factors, stimulates binding of mRNA and methionyl-tRNAi to the 40S ribosome. The eIF-3 complex specifically targets and initiates translation of a subset of mRNAs involved in cell proliferation.</text>
</comment>
<comment type="subunit">
    <text evidence="1">Component of the eukaryotic translation initiation factor 3 (eIF-3) complex.</text>
</comment>
<comment type="subcellular location">
    <subcellularLocation>
        <location evidence="1">Cytoplasm</location>
    </subcellularLocation>
</comment>
<comment type="similarity">
    <text evidence="1">Belongs to the eIF-3 subunit F family.</text>
</comment>
<protein>
    <recommendedName>
        <fullName evidence="1">Eukaryotic translation initiation factor 3 subunit F</fullName>
        <shortName evidence="1">eIF3f</shortName>
    </recommendedName>
</protein>
<dbReference type="EMBL" id="GG704912">
    <property type="protein sequence ID" value="EAS31655.1"/>
    <property type="molecule type" value="Genomic_DNA"/>
</dbReference>
<dbReference type="RefSeq" id="XP_001243238.1">
    <property type="nucleotide sequence ID" value="XM_001243237.2"/>
</dbReference>
<dbReference type="SMR" id="Q1DRC9"/>
<dbReference type="STRING" id="246410.Q1DRC9"/>
<dbReference type="GeneID" id="4562212"/>
<dbReference type="KEGG" id="cim:CIMG_07134"/>
<dbReference type="VEuPathDB" id="FungiDB:CIMG_07134"/>
<dbReference type="InParanoid" id="Q1DRC9"/>
<dbReference type="OMA" id="EYFVHFH"/>
<dbReference type="OrthoDB" id="25498at2759"/>
<dbReference type="Proteomes" id="UP000001261">
    <property type="component" value="Unassembled WGS sequence"/>
</dbReference>
<dbReference type="GO" id="GO:0016282">
    <property type="term" value="C:eukaryotic 43S preinitiation complex"/>
    <property type="evidence" value="ECO:0007669"/>
    <property type="project" value="UniProtKB-UniRule"/>
</dbReference>
<dbReference type="GO" id="GO:0033290">
    <property type="term" value="C:eukaryotic 48S preinitiation complex"/>
    <property type="evidence" value="ECO:0007669"/>
    <property type="project" value="UniProtKB-UniRule"/>
</dbReference>
<dbReference type="GO" id="GO:0071541">
    <property type="term" value="C:eukaryotic translation initiation factor 3 complex, eIF3m"/>
    <property type="evidence" value="ECO:0007669"/>
    <property type="project" value="TreeGrafter"/>
</dbReference>
<dbReference type="GO" id="GO:0008237">
    <property type="term" value="F:metallopeptidase activity"/>
    <property type="evidence" value="ECO:0007669"/>
    <property type="project" value="InterPro"/>
</dbReference>
<dbReference type="GO" id="GO:0003743">
    <property type="term" value="F:translation initiation factor activity"/>
    <property type="evidence" value="ECO:0007669"/>
    <property type="project" value="UniProtKB-UniRule"/>
</dbReference>
<dbReference type="GO" id="GO:0031369">
    <property type="term" value="F:translation initiation factor binding"/>
    <property type="evidence" value="ECO:0007669"/>
    <property type="project" value="InterPro"/>
</dbReference>
<dbReference type="GO" id="GO:0001732">
    <property type="term" value="P:formation of cytoplasmic translation initiation complex"/>
    <property type="evidence" value="ECO:0007669"/>
    <property type="project" value="UniProtKB-UniRule"/>
</dbReference>
<dbReference type="CDD" id="cd08064">
    <property type="entry name" value="MPN_eIF3f"/>
    <property type="match status" value="1"/>
</dbReference>
<dbReference type="FunFam" id="3.40.140.10:FF:000019">
    <property type="entry name" value="Eukaryotic translation initiation factor 3 subunit F"/>
    <property type="match status" value="1"/>
</dbReference>
<dbReference type="Gene3D" id="3.40.140.10">
    <property type="entry name" value="Cytidine Deaminase, domain 2"/>
    <property type="match status" value="1"/>
</dbReference>
<dbReference type="HAMAP" id="MF_03005">
    <property type="entry name" value="eIF3f"/>
    <property type="match status" value="1"/>
</dbReference>
<dbReference type="InterPro" id="IPR027531">
    <property type="entry name" value="eIF3f"/>
</dbReference>
<dbReference type="InterPro" id="IPR024969">
    <property type="entry name" value="EIF3F/CSN6-like_C"/>
</dbReference>
<dbReference type="InterPro" id="IPR000555">
    <property type="entry name" value="JAMM/MPN+_dom"/>
</dbReference>
<dbReference type="InterPro" id="IPR037518">
    <property type="entry name" value="MPN"/>
</dbReference>
<dbReference type="PANTHER" id="PTHR10540:SF6">
    <property type="entry name" value="EUKARYOTIC TRANSLATION INITIATION FACTOR 3 SUBUNIT F"/>
    <property type="match status" value="1"/>
</dbReference>
<dbReference type="PANTHER" id="PTHR10540">
    <property type="entry name" value="EUKARYOTIC TRANSLATION INITIATION FACTOR 3 SUBUNIT F-RELATED"/>
    <property type="match status" value="1"/>
</dbReference>
<dbReference type="Pfam" id="PF01398">
    <property type="entry name" value="JAB"/>
    <property type="match status" value="1"/>
</dbReference>
<dbReference type="Pfam" id="PF13012">
    <property type="entry name" value="MitMem_reg"/>
    <property type="match status" value="1"/>
</dbReference>
<dbReference type="SMART" id="SM00232">
    <property type="entry name" value="JAB_MPN"/>
    <property type="match status" value="1"/>
</dbReference>
<dbReference type="PROSITE" id="PS50249">
    <property type="entry name" value="MPN"/>
    <property type="match status" value="1"/>
</dbReference>
<name>EIF3F_COCIM</name>
<gene>
    <name type="ORF">CIMG_07134</name>
</gene>
<evidence type="ECO:0000255" key="1">
    <source>
        <dbReference type="HAMAP-Rule" id="MF_03005"/>
    </source>
</evidence>
<evidence type="ECO:0000255" key="2">
    <source>
        <dbReference type="PROSITE-ProRule" id="PRU01182"/>
    </source>
</evidence>
<evidence type="ECO:0000256" key="3">
    <source>
        <dbReference type="SAM" id="MobiDB-lite"/>
    </source>
</evidence>
<keyword id="KW-0963">Cytoplasm</keyword>
<keyword id="KW-0396">Initiation factor</keyword>
<keyword id="KW-0648">Protein biosynthesis</keyword>
<keyword id="KW-1185">Reference proteome</keyword>